<protein>
    <recommendedName>
        <fullName>Putative uncharacterized protein MRGPRG-AS1</fullName>
    </recommendedName>
    <alternativeName>
        <fullName>MRGPRG antisense RNA 1</fullName>
    </alternativeName>
    <alternativeName>
        <fullName>MRGPRG antisense gene protein 1</fullName>
    </alternativeName>
</protein>
<organism>
    <name type="scientific">Homo sapiens</name>
    <name type="common">Human</name>
    <dbReference type="NCBI Taxonomy" id="9606"/>
    <lineage>
        <taxon>Eukaryota</taxon>
        <taxon>Metazoa</taxon>
        <taxon>Chordata</taxon>
        <taxon>Craniata</taxon>
        <taxon>Vertebrata</taxon>
        <taxon>Euteleostomi</taxon>
        <taxon>Mammalia</taxon>
        <taxon>Eutheria</taxon>
        <taxon>Euarchontoglires</taxon>
        <taxon>Primates</taxon>
        <taxon>Haplorrhini</taxon>
        <taxon>Catarrhini</taxon>
        <taxon>Hominidae</taxon>
        <taxon>Homo</taxon>
    </lineage>
</organism>
<reference key="1">
    <citation type="submission" date="2003-09" db="EMBL/GenBank/DDBJ databases">
        <title>A new spermatogenesis-related gene.</title>
        <authorList>
            <person name="Yang C.B."/>
            <person name="Miao S.Y."/>
            <person name="Zhang X.D."/>
            <person name="Qiao Y."/>
            <person name="Liang G."/>
            <person name="Wang L.F."/>
        </authorList>
    </citation>
    <scope>NUCLEOTIDE SEQUENCE [LARGE SCALE MRNA]</scope>
    <scope>VARIANTS ALA-6; PHE-135 AND VAL-142</scope>
    <source>
        <tissue>Testis</tissue>
    </source>
</reference>
<reference key="2">
    <citation type="journal article" date="2004" name="Nat. Genet.">
        <title>Complete sequencing and characterization of 21,243 full-length human cDNAs.</title>
        <authorList>
            <person name="Ota T."/>
            <person name="Suzuki Y."/>
            <person name="Nishikawa T."/>
            <person name="Otsuki T."/>
            <person name="Sugiyama T."/>
            <person name="Irie R."/>
            <person name="Wakamatsu A."/>
            <person name="Hayashi K."/>
            <person name="Sato H."/>
            <person name="Nagai K."/>
            <person name="Kimura K."/>
            <person name="Makita H."/>
            <person name="Sekine M."/>
            <person name="Obayashi M."/>
            <person name="Nishi T."/>
            <person name="Shibahara T."/>
            <person name="Tanaka T."/>
            <person name="Ishii S."/>
            <person name="Yamamoto J."/>
            <person name="Saito K."/>
            <person name="Kawai Y."/>
            <person name="Isono Y."/>
            <person name="Nakamura Y."/>
            <person name="Nagahari K."/>
            <person name="Murakami K."/>
            <person name="Yasuda T."/>
            <person name="Iwayanagi T."/>
            <person name="Wagatsuma M."/>
            <person name="Shiratori A."/>
            <person name="Sudo H."/>
            <person name="Hosoiri T."/>
            <person name="Kaku Y."/>
            <person name="Kodaira H."/>
            <person name="Kondo H."/>
            <person name="Sugawara M."/>
            <person name="Takahashi M."/>
            <person name="Kanda K."/>
            <person name="Yokoi T."/>
            <person name="Furuya T."/>
            <person name="Kikkawa E."/>
            <person name="Omura Y."/>
            <person name="Abe K."/>
            <person name="Kamihara K."/>
            <person name="Katsuta N."/>
            <person name="Sato K."/>
            <person name="Tanikawa M."/>
            <person name="Yamazaki M."/>
            <person name="Ninomiya K."/>
            <person name="Ishibashi T."/>
            <person name="Yamashita H."/>
            <person name="Murakawa K."/>
            <person name="Fujimori K."/>
            <person name="Tanai H."/>
            <person name="Kimata M."/>
            <person name="Watanabe M."/>
            <person name="Hiraoka S."/>
            <person name="Chiba Y."/>
            <person name="Ishida S."/>
            <person name="Ono Y."/>
            <person name="Takiguchi S."/>
            <person name="Watanabe S."/>
            <person name="Yosida M."/>
            <person name="Hotuta T."/>
            <person name="Kusano J."/>
            <person name="Kanehori K."/>
            <person name="Takahashi-Fujii A."/>
            <person name="Hara H."/>
            <person name="Tanase T.-O."/>
            <person name="Nomura Y."/>
            <person name="Togiya S."/>
            <person name="Komai F."/>
            <person name="Hara R."/>
            <person name="Takeuchi K."/>
            <person name="Arita M."/>
            <person name="Imose N."/>
            <person name="Musashino K."/>
            <person name="Yuuki H."/>
            <person name="Oshima A."/>
            <person name="Sasaki N."/>
            <person name="Aotsuka S."/>
            <person name="Yoshikawa Y."/>
            <person name="Matsunawa H."/>
            <person name="Ichihara T."/>
            <person name="Shiohata N."/>
            <person name="Sano S."/>
            <person name="Moriya S."/>
            <person name="Momiyama H."/>
            <person name="Satoh N."/>
            <person name="Takami S."/>
            <person name="Terashima Y."/>
            <person name="Suzuki O."/>
            <person name="Nakagawa S."/>
            <person name="Senoh A."/>
            <person name="Mizoguchi H."/>
            <person name="Goto Y."/>
            <person name="Shimizu F."/>
            <person name="Wakebe H."/>
            <person name="Hishigaki H."/>
            <person name="Watanabe T."/>
            <person name="Sugiyama A."/>
            <person name="Takemoto M."/>
            <person name="Kawakami B."/>
            <person name="Yamazaki M."/>
            <person name="Watanabe K."/>
            <person name="Kumagai A."/>
            <person name="Itakura S."/>
            <person name="Fukuzumi Y."/>
            <person name="Fujimori Y."/>
            <person name="Komiyama M."/>
            <person name="Tashiro H."/>
            <person name="Tanigami A."/>
            <person name="Fujiwara T."/>
            <person name="Ono T."/>
            <person name="Yamada K."/>
            <person name="Fujii Y."/>
            <person name="Ozaki K."/>
            <person name="Hirao M."/>
            <person name="Ohmori Y."/>
            <person name="Kawabata A."/>
            <person name="Hikiji T."/>
            <person name="Kobatake N."/>
            <person name="Inagaki H."/>
            <person name="Ikema Y."/>
            <person name="Okamoto S."/>
            <person name="Okitani R."/>
            <person name="Kawakami T."/>
            <person name="Noguchi S."/>
            <person name="Itoh T."/>
            <person name="Shigeta K."/>
            <person name="Senba T."/>
            <person name="Matsumura K."/>
            <person name="Nakajima Y."/>
            <person name="Mizuno T."/>
            <person name="Morinaga M."/>
            <person name="Sasaki M."/>
            <person name="Togashi T."/>
            <person name="Oyama M."/>
            <person name="Hata H."/>
            <person name="Watanabe M."/>
            <person name="Komatsu T."/>
            <person name="Mizushima-Sugano J."/>
            <person name="Satoh T."/>
            <person name="Shirai Y."/>
            <person name="Takahashi Y."/>
            <person name="Nakagawa K."/>
            <person name="Okumura K."/>
            <person name="Nagase T."/>
            <person name="Nomura N."/>
            <person name="Kikuchi H."/>
            <person name="Masuho Y."/>
            <person name="Yamashita R."/>
            <person name="Nakai K."/>
            <person name="Yada T."/>
            <person name="Nakamura Y."/>
            <person name="Ohara O."/>
            <person name="Isogai T."/>
            <person name="Sugano S."/>
        </authorList>
    </citation>
    <scope>NUCLEOTIDE SEQUENCE [LARGE SCALE MRNA]</scope>
    <scope>VARIANTS PHE-135 AND VAL-142</scope>
    <source>
        <tissue>Testis</tissue>
    </source>
</reference>
<reference key="3">
    <citation type="journal article" date="2006" name="Nature">
        <title>Human chromosome 11 DNA sequence and analysis including novel gene identification.</title>
        <authorList>
            <person name="Taylor T.D."/>
            <person name="Noguchi H."/>
            <person name="Totoki Y."/>
            <person name="Toyoda A."/>
            <person name="Kuroki Y."/>
            <person name="Dewar K."/>
            <person name="Lloyd C."/>
            <person name="Itoh T."/>
            <person name="Takeda T."/>
            <person name="Kim D.-W."/>
            <person name="She X."/>
            <person name="Barlow K.F."/>
            <person name="Bloom T."/>
            <person name="Bruford E."/>
            <person name="Chang J.L."/>
            <person name="Cuomo C.A."/>
            <person name="Eichler E."/>
            <person name="FitzGerald M.G."/>
            <person name="Jaffe D.B."/>
            <person name="LaButti K."/>
            <person name="Nicol R."/>
            <person name="Park H.-S."/>
            <person name="Seaman C."/>
            <person name="Sougnez C."/>
            <person name="Yang X."/>
            <person name="Zimmer A.R."/>
            <person name="Zody M.C."/>
            <person name="Birren B.W."/>
            <person name="Nusbaum C."/>
            <person name="Fujiyama A."/>
            <person name="Hattori M."/>
            <person name="Rogers J."/>
            <person name="Lander E.S."/>
            <person name="Sakaki Y."/>
        </authorList>
    </citation>
    <scope>NUCLEOTIDE SEQUENCE [LARGE SCALE GENOMIC DNA]</scope>
</reference>
<reference key="4">
    <citation type="journal article" date="2004" name="Genome Res.">
        <title>The status, quality, and expansion of the NIH full-length cDNA project: the Mammalian Gene Collection (MGC).</title>
        <authorList>
            <consortium name="The MGC Project Team"/>
        </authorList>
    </citation>
    <scope>NUCLEOTIDE SEQUENCE [LARGE SCALE MRNA]</scope>
</reference>
<dbReference type="EMBL" id="AY422795">
    <property type="protein sequence ID" value="AAR84193.1"/>
    <property type="molecule type" value="mRNA"/>
</dbReference>
<dbReference type="EMBL" id="AK093421">
    <property type="protein sequence ID" value="BAC04158.1"/>
    <property type="molecule type" value="mRNA"/>
</dbReference>
<dbReference type="EMBL" id="AK097749">
    <property type="protein sequence ID" value="BAC05159.1"/>
    <property type="molecule type" value="mRNA"/>
</dbReference>
<dbReference type="EMBL" id="AC109309">
    <property type="status" value="NOT_ANNOTATED_CDS"/>
    <property type="molecule type" value="Genomic_DNA"/>
</dbReference>
<dbReference type="EMBL" id="BC104971">
    <property type="status" value="NOT_ANNOTATED_CDS"/>
    <property type="molecule type" value="mRNA"/>
</dbReference>
<dbReference type="EMBL" id="BC104973">
    <property type="status" value="NOT_ANNOTATED_CDS"/>
    <property type="molecule type" value="mRNA"/>
</dbReference>
<dbReference type="BioMuta" id="HGNC:26691"/>
<dbReference type="DMDM" id="115502126"/>
<dbReference type="MassIVE" id="Q2M3A8"/>
<dbReference type="ProteomicsDB" id="61368"/>
<dbReference type="AGR" id="HGNC:26691"/>
<dbReference type="GeneCards" id="MRGPRG-AS1"/>
<dbReference type="HGNC" id="HGNC:26691">
    <property type="gene designation" value="MRGPRG-AS1"/>
</dbReference>
<dbReference type="neXtProt" id="NX_Q2M3A8"/>
<dbReference type="InParanoid" id="Q2M3A8"/>
<dbReference type="PAN-GO" id="Q2M3A8">
    <property type="GO annotations" value="0 GO annotations based on evolutionary models"/>
</dbReference>
<dbReference type="PathwayCommons" id="Q2M3A8"/>
<dbReference type="Pharos" id="Q2M3A8">
    <property type="development level" value="Tdark"/>
</dbReference>
<dbReference type="Proteomes" id="UP000005640">
    <property type="component" value="Unplaced"/>
</dbReference>
<dbReference type="RNAct" id="Q2M3A8">
    <property type="molecule type" value="protein"/>
</dbReference>
<comment type="caution">
    <text evidence="4">Product of a dubious CDS prediction.</text>
</comment>
<name>MRAS1_HUMAN</name>
<accession>Q2M3A8</accession>
<accession>Q6TF48</accession>
<accession>Q8N7R8</accession>
<accession>Q8N9X7</accession>
<sequence length="158" mass="16456">MDLASEITSATQTSSLCSSGRGHAGYPAPGIVAHGFETHGTARVAQGHLLPPCLLPPPQMPVLAALRDLSRRGSTSSSRSPSRPVSTSASKPCLPASCLGETWSISINLVGSSGHLQSPGAQRDAQRETGCLGPSWLPHHQGRDEELSLSHSAQGEEF</sequence>
<gene>
    <name type="primary">MRGPRG-AS1</name>
    <name type="synonym">C11orf36</name>
    <name type="ORF">HSD-40</name>
    <name type="ORF">HSD40</name>
</gene>
<proteinExistence type="uncertain"/>
<evidence type="ECO:0000256" key="1">
    <source>
        <dbReference type="SAM" id="MobiDB-lite"/>
    </source>
</evidence>
<evidence type="ECO:0000269" key="2">
    <source>
    </source>
</evidence>
<evidence type="ECO:0000269" key="3">
    <source ref="1"/>
</evidence>
<evidence type="ECO:0000305" key="4"/>
<feature type="chain" id="PRO_0000251725" description="Putative uncharacterized protein MRGPRG-AS1">
    <location>
        <begin position="1"/>
        <end position="158"/>
    </location>
</feature>
<feature type="region of interest" description="Disordered" evidence="1">
    <location>
        <begin position="1"/>
        <end position="20"/>
    </location>
</feature>
<feature type="region of interest" description="Disordered" evidence="1">
    <location>
        <begin position="66"/>
        <end position="94"/>
    </location>
</feature>
<feature type="region of interest" description="Disordered" evidence="1">
    <location>
        <begin position="111"/>
        <end position="158"/>
    </location>
</feature>
<feature type="compositionally biased region" description="Polar residues" evidence="1">
    <location>
        <begin position="1"/>
        <end position="18"/>
    </location>
</feature>
<feature type="compositionally biased region" description="Low complexity" evidence="1">
    <location>
        <begin position="72"/>
        <end position="90"/>
    </location>
</feature>
<feature type="compositionally biased region" description="Polar residues" evidence="1">
    <location>
        <begin position="111"/>
        <end position="120"/>
    </location>
</feature>
<feature type="compositionally biased region" description="Polar residues" evidence="1">
    <location>
        <begin position="149"/>
        <end position="158"/>
    </location>
</feature>
<feature type="sequence variant" id="VAR_027707" description="In dbSNP:rs11026002." evidence="3">
    <original>E</original>
    <variation>A</variation>
    <location>
        <position position="6"/>
    </location>
</feature>
<feature type="sequence variant" id="VAR_027708" description="In dbSNP:rs11026004." evidence="2 3">
    <original>S</original>
    <variation>F</variation>
    <location>
        <position position="135"/>
    </location>
</feature>
<feature type="sequence variant" id="VAR_027709" description="In dbSNP:rs12280457." evidence="2 3">
    <original>G</original>
    <variation>V</variation>
    <location>
        <position position="142"/>
    </location>
</feature>
<feature type="sequence conflict" description="In Ref. 2; BAC04158." evidence="4" ref="2">
    <original>L</original>
    <variation>S</variation>
    <location>
        <position position="3"/>
    </location>
</feature>
<keyword id="KW-1185">Reference proteome</keyword>